<feature type="chain" id="PRO_0000082089" description="ATP synthase subunit a">
    <location>
        <begin position="1"/>
        <end position="199"/>
    </location>
</feature>
<feature type="transmembrane region" description="Helical" evidence="1">
    <location>
        <begin position="2"/>
        <end position="22"/>
    </location>
</feature>
<feature type="transmembrane region" description="Helical" evidence="1">
    <location>
        <begin position="25"/>
        <end position="45"/>
    </location>
</feature>
<feature type="transmembrane region" description="Helical" evidence="1">
    <location>
        <begin position="53"/>
        <end position="73"/>
    </location>
</feature>
<feature type="transmembrane region" description="Helical" evidence="1">
    <location>
        <begin position="80"/>
        <end position="100"/>
    </location>
</feature>
<feature type="transmembrane region" description="Helical" evidence="1">
    <location>
        <begin position="143"/>
        <end position="163"/>
    </location>
</feature>
<feature type="transmembrane region" description="Helical" evidence="1">
    <location>
        <begin position="164"/>
        <end position="184"/>
    </location>
</feature>
<evidence type="ECO:0000255" key="1"/>
<evidence type="ECO:0000305" key="2"/>
<reference key="1">
    <citation type="journal article" date="1992" name="Genetics">
        <title>The mitochondrial genomes of two nematodes, Caenorhabditis elegans and Ascaris suum.</title>
        <authorList>
            <person name="Okimoto R."/>
            <person name="Macfarlane J.L."/>
            <person name="Clary D.O."/>
            <person name="Wolstenholme D.R."/>
        </authorList>
    </citation>
    <scope>NUCLEOTIDE SEQUENCE [GENOMIC DNA]</scope>
    <source>
        <tissue>Body wall muscle</tissue>
        <tissue>Egg</tissue>
    </source>
</reference>
<protein>
    <recommendedName>
        <fullName>ATP synthase subunit a</fullName>
    </recommendedName>
    <alternativeName>
        <fullName>F-ATPase protein 6</fullName>
    </alternativeName>
</protein>
<accession>P24876</accession>
<gene>
    <name type="primary">ATP6</name>
</gene>
<proteinExistence type="inferred from homology"/>
<dbReference type="EMBL" id="X54253">
    <property type="protein sequence ID" value="CAA38166.1"/>
    <property type="molecule type" value="Genomic_DNA"/>
</dbReference>
<dbReference type="PIR" id="S26017">
    <property type="entry name" value="S26017"/>
</dbReference>
<dbReference type="RefSeq" id="NP_006944.1">
    <property type="nucleotide sequence ID" value="NC_001327.1"/>
</dbReference>
<dbReference type="SMR" id="P24876"/>
<dbReference type="GeneID" id="807663"/>
<dbReference type="CTD" id="4508"/>
<dbReference type="GO" id="GO:0005743">
    <property type="term" value="C:mitochondrial inner membrane"/>
    <property type="evidence" value="ECO:0007669"/>
    <property type="project" value="UniProtKB-SubCell"/>
</dbReference>
<dbReference type="GO" id="GO:0045259">
    <property type="term" value="C:proton-transporting ATP synthase complex"/>
    <property type="evidence" value="ECO:0007669"/>
    <property type="project" value="UniProtKB-KW"/>
</dbReference>
<dbReference type="GO" id="GO:0046933">
    <property type="term" value="F:proton-transporting ATP synthase activity, rotational mechanism"/>
    <property type="evidence" value="ECO:0007669"/>
    <property type="project" value="TreeGrafter"/>
</dbReference>
<dbReference type="Gene3D" id="1.20.120.220">
    <property type="entry name" value="ATP synthase, F0 complex, subunit A"/>
    <property type="match status" value="1"/>
</dbReference>
<dbReference type="InterPro" id="IPR000568">
    <property type="entry name" value="ATP_synth_F0_asu"/>
</dbReference>
<dbReference type="InterPro" id="IPR023011">
    <property type="entry name" value="ATP_synth_F0_asu_AS"/>
</dbReference>
<dbReference type="InterPro" id="IPR045083">
    <property type="entry name" value="ATP_synth_F0_asu_bact/mt"/>
</dbReference>
<dbReference type="InterPro" id="IPR035908">
    <property type="entry name" value="F0_ATP_A_sf"/>
</dbReference>
<dbReference type="PANTHER" id="PTHR11410">
    <property type="entry name" value="ATP SYNTHASE SUBUNIT A"/>
    <property type="match status" value="1"/>
</dbReference>
<dbReference type="PANTHER" id="PTHR11410:SF0">
    <property type="entry name" value="ATP SYNTHASE SUBUNIT A"/>
    <property type="match status" value="1"/>
</dbReference>
<dbReference type="Pfam" id="PF00119">
    <property type="entry name" value="ATP-synt_A"/>
    <property type="match status" value="1"/>
</dbReference>
<dbReference type="SUPFAM" id="SSF81336">
    <property type="entry name" value="F1F0 ATP synthase subunit A"/>
    <property type="match status" value="1"/>
</dbReference>
<dbReference type="PROSITE" id="PS00449">
    <property type="entry name" value="ATPASE_A"/>
    <property type="match status" value="1"/>
</dbReference>
<organism>
    <name type="scientific">Ascaris suum</name>
    <name type="common">Pig roundworm</name>
    <name type="synonym">Ascaris lumbricoides</name>
    <dbReference type="NCBI Taxonomy" id="6253"/>
    <lineage>
        <taxon>Eukaryota</taxon>
        <taxon>Metazoa</taxon>
        <taxon>Ecdysozoa</taxon>
        <taxon>Nematoda</taxon>
        <taxon>Chromadorea</taxon>
        <taxon>Rhabditida</taxon>
        <taxon>Spirurina</taxon>
        <taxon>Ascaridomorpha</taxon>
        <taxon>Ascaridoidea</taxon>
        <taxon>Ascarididae</taxon>
        <taxon>Ascaris</taxon>
    </lineage>
</organism>
<geneLocation type="mitochondrion"/>
<sequence length="199" mass="23066">MTNVYFLDIFMFVYVLQFLFYFKESMLGVLVNKFLGLLVVVFSYTDSLPLSSVISVFTFLVLLTCCFGGYFMYSFCPCGMIEFTFVYAMVAWLSTLLTFITSEKFSIYISKAGDSFLKTFSMLLVELVSEVSRPLALTVRLTVNVLVGHVISMMLYQLLELYLGIFYVWIVVLAIVMECFVFFIQSYIFSRLIYLYLNE</sequence>
<keyword id="KW-0066">ATP synthesis</keyword>
<keyword id="KW-0138">CF(0)</keyword>
<keyword id="KW-0375">Hydrogen ion transport</keyword>
<keyword id="KW-0406">Ion transport</keyword>
<keyword id="KW-0472">Membrane</keyword>
<keyword id="KW-0496">Mitochondrion</keyword>
<keyword id="KW-0999">Mitochondrion inner membrane</keyword>
<keyword id="KW-0812">Transmembrane</keyword>
<keyword id="KW-1133">Transmembrane helix</keyword>
<keyword id="KW-0813">Transport</keyword>
<comment type="function">
    <text>Mitochondrial membrane ATP synthase (F(1)F(0) ATP synthase or Complex V) produces ATP from ADP in the presence of a proton gradient across the membrane which is generated by electron transport complexes of the respiratory chain. F-type ATPases consist of two structural domains, F(1) - containing the extramembraneous catalytic core and F(0) - containing the membrane proton channel, linked together by a central stalk and a peripheral stalk. During catalysis, ATP synthesis in the catalytic domain of F(1) is coupled via a rotary mechanism of the central stalk subunits to proton translocation. Key component of the proton channel; it may play a direct role in the translocation of protons across the membrane.</text>
</comment>
<comment type="subunit">
    <text>F-type ATPases have 2 components, CF(1) - the catalytic core - and CF(0) - the membrane proton channel. CF(1) has five subunits: alpha(3), beta(3), gamma(1), delta(1), epsilon(1). CF(0) has three main subunits: a, b and c.</text>
</comment>
<comment type="subcellular location">
    <subcellularLocation>
        <location>Mitochondrion inner membrane</location>
        <topology>Multi-pass membrane protein</topology>
    </subcellularLocation>
</comment>
<comment type="similarity">
    <text evidence="2">Belongs to the ATPase A chain family.</text>
</comment>
<name>ATP6_ASCSU</name>